<reference key="1">
    <citation type="journal article" date="1997" name="Nature">
        <title>The complete genome sequence of the hyperthermophilic, sulphate-reducing archaeon Archaeoglobus fulgidus.</title>
        <authorList>
            <person name="Klenk H.-P."/>
            <person name="Clayton R.A."/>
            <person name="Tomb J.-F."/>
            <person name="White O."/>
            <person name="Nelson K.E."/>
            <person name="Ketchum K.A."/>
            <person name="Dodson R.J."/>
            <person name="Gwinn M.L."/>
            <person name="Hickey E.K."/>
            <person name="Peterson J.D."/>
            <person name="Richardson D.L."/>
            <person name="Kerlavage A.R."/>
            <person name="Graham D.E."/>
            <person name="Kyrpides N.C."/>
            <person name="Fleischmann R.D."/>
            <person name="Quackenbush J."/>
            <person name="Lee N.H."/>
            <person name="Sutton G.G."/>
            <person name="Gill S.R."/>
            <person name="Kirkness E.F."/>
            <person name="Dougherty B.A."/>
            <person name="McKenney K."/>
            <person name="Adams M.D."/>
            <person name="Loftus B.J."/>
            <person name="Peterson S.N."/>
            <person name="Reich C.I."/>
            <person name="McNeil L.K."/>
            <person name="Badger J.H."/>
            <person name="Glodek A."/>
            <person name="Zhou L."/>
            <person name="Overbeek R."/>
            <person name="Gocayne J.D."/>
            <person name="Weidman J.F."/>
            <person name="McDonald L.A."/>
            <person name="Utterback T.R."/>
            <person name="Cotton M.D."/>
            <person name="Spriggs T."/>
            <person name="Artiach P."/>
            <person name="Kaine B.P."/>
            <person name="Sykes S.M."/>
            <person name="Sadow P.W."/>
            <person name="D'Andrea K.P."/>
            <person name="Bowman C."/>
            <person name="Fujii C."/>
            <person name="Garland S.A."/>
            <person name="Mason T.M."/>
            <person name="Olsen G.J."/>
            <person name="Fraser C.M."/>
            <person name="Smith H.O."/>
            <person name="Woese C.R."/>
            <person name="Venter J.C."/>
        </authorList>
    </citation>
    <scope>NUCLEOTIDE SEQUENCE [LARGE SCALE GENOMIC DNA]</scope>
    <source>
        <strain>ATCC 49558 / DSM 4304 / JCM 9628 / NBRC 100126 / VC-16</strain>
    </source>
</reference>
<feature type="chain" id="PRO_0000137912" description="UPF0098 protein AF_1698">
    <location>
        <begin position="1"/>
        <end position="287"/>
    </location>
</feature>
<gene>
    <name type="ordered locus">AF_1698</name>
</gene>
<proteinExistence type="inferred from homology"/>
<evidence type="ECO:0000305" key="1"/>
<accession>O28575</accession>
<comment type="similarity">
    <text evidence="1">Belongs to the UPF0098 family.</text>
</comment>
<protein>
    <recommendedName>
        <fullName>UPF0098 protein AF_1698</fullName>
    </recommendedName>
</protein>
<dbReference type="EMBL" id="AE000782">
    <property type="protein sequence ID" value="AAB89551.1"/>
    <property type="molecule type" value="Genomic_DNA"/>
</dbReference>
<dbReference type="PIR" id="A69462">
    <property type="entry name" value="A69462"/>
</dbReference>
<dbReference type="SMR" id="O28575"/>
<dbReference type="STRING" id="224325.AF_1698"/>
<dbReference type="PaxDb" id="224325-AF_1698"/>
<dbReference type="EnsemblBacteria" id="AAB89551">
    <property type="protein sequence ID" value="AAB89551"/>
    <property type="gene ID" value="AF_1698"/>
</dbReference>
<dbReference type="KEGG" id="afu:AF_1698"/>
<dbReference type="eggNOG" id="arCOG04702">
    <property type="taxonomic scope" value="Archaea"/>
</dbReference>
<dbReference type="HOGENOM" id="CLU_968377_0_0_2"/>
<dbReference type="PhylomeDB" id="O28575"/>
<dbReference type="Proteomes" id="UP000002199">
    <property type="component" value="Chromosome"/>
</dbReference>
<dbReference type="CDD" id="cd00865">
    <property type="entry name" value="PEBP_bact_arch"/>
    <property type="match status" value="1"/>
</dbReference>
<dbReference type="Gene3D" id="3.90.280.10">
    <property type="entry name" value="PEBP-like"/>
    <property type="match status" value="1"/>
</dbReference>
<dbReference type="InterPro" id="IPR008914">
    <property type="entry name" value="PEBP"/>
</dbReference>
<dbReference type="InterPro" id="IPR036610">
    <property type="entry name" value="PEBP-like_sf"/>
</dbReference>
<dbReference type="InterPro" id="IPR005247">
    <property type="entry name" value="YbhB_YbcL/LppC-like"/>
</dbReference>
<dbReference type="NCBIfam" id="TIGR00481">
    <property type="entry name" value="YbhB/YbcL family Raf kinase inhibitor-like protein"/>
    <property type="match status" value="1"/>
</dbReference>
<dbReference type="PANTHER" id="PTHR30289:SF1">
    <property type="entry name" value="PEBP (PHOSPHATIDYLETHANOLAMINE-BINDING PROTEIN) FAMILY PROTEIN"/>
    <property type="match status" value="1"/>
</dbReference>
<dbReference type="PANTHER" id="PTHR30289">
    <property type="entry name" value="UNCHARACTERIZED PROTEIN YBCL-RELATED"/>
    <property type="match status" value="1"/>
</dbReference>
<dbReference type="Pfam" id="PF01161">
    <property type="entry name" value="PBP"/>
    <property type="match status" value="1"/>
</dbReference>
<dbReference type="SUPFAM" id="SSF49777">
    <property type="entry name" value="PEBP-like"/>
    <property type="match status" value="1"/>
</dbReference>
<sequence length="287" mass="31884">MGLLQDYSQRREEGEGRGSNFTRFSCWSCDFCRCLCNAEIAGESGGKVCCCGGKGGGPDQHSETRSCDNSGSWGRYGLAAFAPCSSLRLPAYLHLHEIQKIVIIFYATKIMGRHLTVFIIALAAVFAACAEEKEMAKSLTVKSAFENGGKIPAKYTCDGEDISPPLYIEGLREDVKSLVIICEDPDAPMGVFTHWIAWNVEPTSEIPENVPKTKFVDEPKMVQGRNDFGKVGYNGPCPPSGEHRYYFRIYAIDTLLQGDYSRQELLRAIEGHILQYGEIYGLYSRSR</sequence>
<organism>
    <name type="scientific">Archaeoglobus fulgidus (strain ATCC 49558 / DSM 4304 / JCM 9628 / NBRC 100126 / VC-16)</name>
    <dbReference type="NCBI Taxonomy" id="224325"/>
    <lineage>
        <taxon>Archaea</taxon>
        <taxon>Methanobacteriati</taxon>
        <taxon>Methanobacteriota</taxon>
        <taxon>Archaeoglobi</taxon>
        <taxon>Archaeoglobales</taxon>
        <taxon>Archaeoglobaceae</taxon>
        <taxon>Archaeoglobus</taxon>
    </lineage>
</organism>
<name>Y1698_ARCFU</name>
<keyword id="KW-1185">Reference proteome</keyword>